<gene>
    <name evidence="4" type="ordered locus">Pmen_3455</name>
</gene>
<proteinExistence type="evidence at protein level"/>
<sequence length="338" mass="39286">MTLTFKPLESYREDFSFRNSPAAIARFPFPFPEDQYMYSVNLEPAVSRDPGSVFEHQFDVDEHYVSEMAERARVLELDPGRCLVMPHMAQAAWDTLAMLMEHLARDYPQHFRLTRQGDAWHWQNLALGIDQRFTFGDPASLPCEPLEYITRQMQGDFAVLDQRDGDLFMDAGMVTCPADWSLRFDAGMSFKQWHSPVPMAHQMGVFDRALKYLLNIQVGAPVRRLNWTLTINPRLDTSPETYHEWGNDRGKVTPDNVGRLVHLRVELQLMARLPRSNALLFGIRTYLISLDELVSNPAWAQRLHRVMRDLPDPIADYKGITRYRQTLVDWLRRFDPEA</sequence>
<name>HODMA_ECTM1</name>
<comment type="function">
    <text evidence="1">Component of the heme-dependent oxidative N-demethylase (HODM) enzyme, that catalyzes the NADPH-dependent oxidation of dimethylamine (DMA) to methylamine (MA) and formaldehyde. Functions in bacterial methylated amine catabolism, linking alkylamine oxidation to the tetrahydrofolate C1 pool. The alpha subunit of HODM binds heme, oxygen and DMA, and serves as the site of the oxidative N-demethylase activity.</text>
</comment>
<comment type="catalytic activity">
    <reaction evidence="1">
        <text>dimethylamine + NADPH + O2 + H(+) = methylamine + formaldehyde + NADP(+) + H2O</text>
        <dbReference type="Rhea" id="RHEA:54828"/>
        <dbReference type="ChEBI" id="CHEBI:15377"/>
        <dbReference type="ChEBI" id="CHEBI:15378"/>
        <dbReference type="ChEBI" id="CHEBI:15379"/>
        <dbReference type="ChEBI" id="CHEBI:16842"/>
        <dbReference type="ChEBI" id="CHEBI:57783"/>
        <dbReference type="ChEBI" id="CHEBI:58040"/>
        <dbReference type="ChEBI" id="CHEBI:58349"/>
        <dbReference type="ChEBI" id="CHEBI:59338"/>
        <dbReference type="EC" id="1.14.13.238"/>
    </reaction>
    <physiologicalReaction direction="left-to-right" evidence="3">
        <dbReference type="Rhea" id="RHEA:54829"/>
    </physiologicalReaction>
</comment>
<comment type="biophysicochemical properties">
    <kinetics>
        <KM evidence="1">24 uM for dimethylamine</KM>
        <text evidence="1">kcat is 9.2 sec(-1).</text>
    </kinetics>
</comment>
<comment type="subunit">
    <text evidence="1">The heme-dependent oxidative N-demethylase (HODM) is a heterotetramer composed of a catalytic alpha subunit, a FMN/2Fe-2S-dependent oxidoreductase beta subunit, a gamma subunit with putative aminotransferase activity, and a delta subunit of unknown function.</text>
</comment>
<comment type="domain">
    <text evidence="1">Traditionally, PAS domains are known for signal transduction, sensing various stimuli. Ortmayer et al. reveal that PAS domains can also support enzymatic activity. The alpha subunit of HODM contains a heme-binding PAS-scaffold that serves as the site of the oxidative N-demethylase activity.</text>
</comment>
<organism>
    <name type="scientific">Ectopseudomonas mendocina (strain ymp)</name>
    <name type="common">Pseudomonas mendocina</name>
    <dbReference type="NCBI Taxonomy" id="399739"/>
    <lineage>
        <taxon>Bacteria</taxon>
        <taxon>Pseudomonadati</taxon>
        <taxon>Pseudomonadota</taxon>
        <taxon>Gammaproteobacteria</taxon>
        <taxon>Pseudomonadales</taxon>
        <taxon>Pseudomonadaceae</taxon>
        <taxon>Ectopseudomonas</taxon>
    </lineage>
</organism>
<keyword id="KW-0002">3D-structure</keyword>
<keyword id="KW-0349">Heme</keyword>
<keyword id="KW-0408">Iron</keyword>
<keyword id="KW-0479">Metal-binding</keyword>
<keyword id="KW-0521">NADP</keyword>
<keyword id="KW-0560">Oxidoreductase</keyword>
<reference key="1">
    <citation type="submission" date="2007-04" db="EMBL/GenBank/DDBJ databases">
        <title>Complete sequence of Pseudomonas mendocina ymp.</title>
        <authorList>
            <consortium name="US DOE Joint Genome Institute"/>
            <person name="Copeland A."/>
            <person name="Lucas S."/>
            <person name="Lapidus A."/>
            <person name="Barry K."/>
            <person name="Glavina del Rio T."/>
            <person name="Dalin E."/>
            <person name="Tice H."/>
            <person name="Pitluck S."/>
            <person name="Kiss H."/>
            <person name="Brettin T."/>
            <person name="Detter J.C."/>
            <person name="Bruce D."/>
            <person name="Han C."/>
            <person name="Schmutz J."/>
            <person name="Larimer F."/>
            <person name="Land M."/>
            <person name="Hauser L."/>
            <person name="Kyrpides N."/>
            <person name="Mikhailova N."/>
            <person name="Hersman L."/>
            <person name="Dubois J."/>
            <person name="Maurice P."/>
            <person name="Richardson P."/>
        </authorList>
    </citation>
    <scope>NUCLEOTIDE SEQUENCE [LARGE SCALE GENOMIC DNA]</scope>
    <source>
        <strain>ymp</strain>
    </source>
</reference>
<reference evidence="5 6 7" key="2">
    <citation type="journal article" date="2016" name="Nature">
        <title>An oxidative N-demethylase reveals PAS transition from ubiquitous sensor to enzyme.</title>
        <authorList>
            <person name="Ortmayer M."/>
            <person name="Lafite P."/>
            <person name="Menon B.R."/>
            <person name="Tralau T."/>
            <person name="Fisher K."/>
            <person name="Denkhaus L."/>
            <person name="Scrutton N.S."/>
            <person name="Rigby S.E."/>
            <person name="Munro A.W."/>
            <person name="Hay S."/>
            <person name="Leys D."/>
        </authorList>
    </citation>
    <scope>X-RAY CRYSTALLOGRAPHY (1.65 ANGSTROMS) IN COMPLEXES WITH HEME B AND DIMETHYLAMINE</scope>
    <scope>FUNCTION</scope>
    <scope>CATALYTIC ACTIVITY</scope>
    <scope>BIOPHYSICOCHEMICAL PROPERTIES</scope>
    <scope>SUBUNIT</scope>
    <scope>DOMAIN</scope>
    <scope>MUTAGENESIS OF TRP-180; ARG-224 AND GLU-266</scope>
</reference>
<feature type="chain" id="PRO_0000461799" description="Heme-dependent oxidative N-demethylase alpha subunit">
    <location>
        <begin position="1"/>
        <end position="338"/>
    </location>
</feature>
<feature type="active site" description="Proton donor" evidence="3">
    <location>
        <position position="224"/>
    </location>
</feature>
<feature type="binding site" evidence="1 5 6 7">
    <location>
        <position position="38"/>
    </location>
    <ligand>
        <name>heme b</name>
        <dbReference type="ChEBI" id="CHEBI:60344"/>
    </ligand>
</feature>
<feature type="binding site" description="proximal binding residue" evidence="1 5 6 7">
    <location>
        <position position="194"/>
    </location>
    <ligand>
        <name>heme b</name>
        <dbReference type="ChEBI" id="CHEBI:60344"/>
    </ligand>
    <ligandPart>
        <name>Fe</name>
        <dbReference type="ChEBI" id="CHEBI:18248"/>
    </ligandPart>
</feature>
<feature type="binding site" evidence="1 5 6 7">
    <location>
        <position position="226"/>
    </location>
    <ligand>
        <name>heme b</name>
        <dbReference type="ChEBI" id="CHEBI:60344"/>
    </ligand>
</feature>
<feature type="binding site" evidence="1 6 7">
    <location>
        <position position="266"/>
    </location>
    <ligand>
        <name>dimethylamine</name>
        <dbReference type="ChEBI" id="CHEBI:58040"/>
    </ligand>
</feature>
<feature type="binding site" evidence="1 5 6 7">
    <location>
        <position position="317"/>
    </location>
    <ligand>
        <name>heme b</name>
        <dbReference type="ChEBI" id="CHEBI:60344"/>
    </ligand>
</feature>
<feature type="binding site" evidence="1 5 6 7">
    <location>
        <position position="318"/>
    </location>
    <ligand>
        <name>heme b</name>
        <dbReference type="ChEBI" id="CHEBI:60344"/>
    </ligand>
</feature>
<feature type="mutagenesis site" description="Loss of catalytic activity. Still able to bind O2." evidence="1">
    <original>W</original>
    <variation>A</variation>
    <location>
        <position position="180"/>
    </location>
</feature>
<feature type="mutagenesis site" description="Loss of catalytic activity. Still able to bind O2." evidence="1">
    <original>R</original>
    <variation>A</variation>
    <location>
        <position position="224"/>
    </location>
</feature>
<feature type="mutagenesis site" description="Loss of catalytic activity. Still able to bind O2 but not DMA." evidence="1">
    <original>E</original>
    <variation>Q</variation>
    <location>
        <position position="266"/>
    </location>
</feature>
<feature type="helix" evidence="8">
    <location>
        <begin position="21"/>
        <end position="26"/>
    </location>
</feature>
<feature type="strand" evidence="8">
    <location>
        <begin position="32"/>
        <end position="35"/>
    </location>
</feature>
<feature type="strand" evidence="8">
    <location>
        <begin position="55"/>
        <end position="58"/>
    </location>
</feature>
<feature type="helix" evidence="8">
    <location>
        <begin position="64"/>
        <end position="77"/>
    </location>
</feature>
<feature type="helix" evidence="8">
    <location>
        <begin position="79"/>
        <end position="81"/>
    </location>
</feature>
<feature type="strand" evidence="8">
    <location>
        <begin position="82"/>
        <end position="84"/>
    </location>
</feature>
<feature type="helix" evidence="8">
    <location>
        <begin position="86"/>
        <end position="88"/>
    </location>
</feature>
<feature type="helix" evidence="8">
    <location>
        <begin position="89"/>
        <end position="106"/>
    </location>
</feature>
<feature type="turn" evidence="8">
    <location>
        <begin position="108"/>
        <end position="110"/>
    </location>
</feature>
<feature type="strand" evidence="8">
    <location>
        <begin position="111"/>
        <end position="116"/>
    </location>
</feature>
<feature type="strand" evidence="8">
    <location>
        <begin position="119"/>
        <end position="124"/>
    </location>
</feature>
<feature type="turn" evidence="8">
    <location>
        <begin position="125"/>
        <end position="128"/>
    </location>
</feature>
<feature type="strand" evidence="8">
    <location>
        <begin position="129"/>
        <end position="134"/>
    </location>
</feature>
<feature type="helix" evidence="8">
    <location>
        <begin position="138"/>
        <end position="140"/>
    </location>
</feature>
<feature type="strand" evidence="8">
    <location>
        <begin position="141"/>
        <end position="143"/>
    </location>
</feature>
<feature type="helix" evidence="8">
    <location>
        <begin position="145"/>
        <end position="150"/>
    </location>
</feature>
<feature type="strand" evidence="8">
    <location>
        <begin position="153"/>
        <end position="163"/>
    </location>
</feature>
<feature type="strand" evidence="8">
    <location>
        <begin position="166"/>
        <end position="173"/>
    </location>
</feature>
<feature type="helix" evidence="8">
    <location>
        <begin position="182"/>
        <end position="185"/>
    </location>
</feature>
<feature type="helix" evidence="8">
    <location>
        <begin position="190"/>
        <end position="193"/>
    </location>
</feature>
<feature type="turn" evidence="8">
    <location>
        <begin position="194"/>
        <end position="196"/>
    </location>
</feature>
<feature type="turn" evidence="8">
    <location>
        <begin position="200"/>
        <end position="204"/>
    </location>
</feature>
<feature type="helix" evidence="8">
    <location>
        <begin position="205"/>
        <end position="214"/>
    </location>
</feature>
<feature type="strand" evidence="8">
    <location>
        <begin position="222"/>
        <end position="233"/>
    </location>
</feature>
<feature type="helix" evidence="8">
    <location>
        <begin position="239"/>
        <end position="244"/>
    </location>
</feature>
<feature type="helix" evidence="8">
    <location>
        <begin position="246"/>
        <end position="250"/>
    </location>
</feature>
<feature type="turn" evidence="8">
    <location>
        <begin position="254"/>
        <end position="256"/>
    </location>
</feature>
<feature type="helix" evidence="8">
    <location>
        <begin position="257"/>
        <end position="260"/>
    </location>
</feature>
<feature type="strand" evidence="8">
    <location>
        <begin position="261"/>
        <end position="272"/>
    </location>
</feature>
<feature type="turn" evidence="8">
    <location>
        <begin position="274"/>
        <end position="276"/>
    </location>
</feature>
<feature type="strand" evidence="8">
    <location>
        <begin position="279"/>
        <end position="289"/>
    </location>
</feature>
<feature type="helix" evidence="8">
    <location>
        <begin position="290"/>
        <end position="293"/>
    </location>
</feature>
<feature type="helix" evidence="8">
    <location>
        <begin position="297"/>
        <end position="309"/>
    </location>
</feature>
<feature type="helix" evidence="8">
    <location>
        <begin position="312"/>
        <end position="317"/>
    </location>
</feature>
<feature type="helix" evidence="8">
    <location>
        <begin position="321"/>
        <end position="323"/>
    </location>
</feature>
<feature type="helix" evidence="8">
    <location>
        <begin position="324"/>
        <end position="332"/>
    </location>
</feature>
<evidence type="ECO:0000269" key="1">
    <source>
    </source>
</evidence>
<evidence type="ECO:0000303" key="2">
    <source>
    </source>
</evidence>
<evidence type="ECO:0000305" key="3">
    <source>
    </source>
</evidence>
<evidence type="ECO:0000312" key="4">
    <source>
        <dbReference type="EMBL" id="ABP86205.1"/>
    </source>
</evidence>
<evidence type="ECO:0007744" key="5">
    <source>
        <dbReference type="PDB" id="5LTE"/>
    </source>
</evidence>
<evidence type="ECO:0007744" key="6">
    <source>
        <dbReference type="PDB" id="5LTH"/>
    </source>
</evidence>
<evidence type="ECO:0007744" key="7">
    <source>
        <dbReference type="PDB" id="5LTI"/>
    </source>
</evidence>
<evidence type="ECO:0007829" key="8">
    <source>
        <dbReference type="PDB" id="5LTE"/>
    </source>
</evidence>
<dbReference type="EC" id="1.14.13.238" evidence="1"/>
<dbReference type="EMBL" id="CP000680">
    <property type="protein sequence ID" value="ABP86205.1"/>
    <property type="molecule type" value="Genomic_DNA"/>
</dbReference>
<dbReference type="PDB" id="5LTE">
    <property type="method" value="X-ray"/>
    <property type="resolution" value="1.65 A"/>
    <property type="chains" value="A=1-338"/>
</dbReference>
<dbReference type="PDB" id="5LTH">
    <property type="method" value="X-ray"/>
    <property type="resolution" value="1.76 A"/>
    <property type="chains" value="A=1-338"/>
</dbReference>
<dbReference type="PDB" id="5LTI">
    <property type="method" value="X-ray"/>
    <property type="resolution" value="1.90 A"/>
    <property type="chains" value="A=1-338"/>
</dbReference>
<dbReference type="PDBsum" id="5LTE"/>
<dbReference type="PDBsum" id="5LTH"/>
<dbReference type="PDBsum" id="5LTI"/>
<dbReference type="SMR" id="A4XXY9"/>
<dbReference type="STRING" id="399739.Pmen_3455"/>
<dbReference type="KEGG" id="pmy:Pmen_3455"/>
<dbReference type="eggNOG" id="ENOG502Z7ZS">
    <property type="taxonomic scope" value="Bacteria"/>
</dbReference>
<dbReference type="HOGENOM" id="CLU_025462_1_0_6"/>
<dbReference type="OrthoDB" id="5242510at2"/>
<dbReference type="GO" id="GO:0046872">
    <property type="term" value="F:metal ion binding"/>
    <property type="evidence" value="ECO:0007669"/>
    <property type="project" value="UniProtKB-KW"/>
</dbReference>
<dbReference type="GO" id="GO:0016491">
    <property type="term" value="F:oxidoreductase activity"/>
    <property type="evidence" value="ECO:0007669"/>
    <property type="project" value="UniProtKB-KW"/>
</dbReference>
<dbReference type="InterPro" id="IPR021848">
    <property type="entry name" value="HODM_asu-like"/>
</dbReference>
<dbReference type="Pfam" id="PF11927">
    <property type="entry name" value="HODM_asu-like"/>
    <property type="match status" value="1"/>
</dbReference>
<protein>
    <recommendedName>
        <fullName evidence="2">Heme-dependent oxidative N-demethylase alpha subunit</fullName>
        <shortName evidence="2">HODM alpha subunit</shortName>
        <ecNumber evidence="1">1.14.13.238</ecNumber>
    </recommendedName>
</protein>
<accession>A4XXY9</accession>